<organism>
    <name type="scientific">Escherichia coli O6:H1 (strain CFT073 / ATCC 700928 / UPEC)</name>
    <dbReference type="NCBI Taxonomy" id="199310"/>
    <lineage>
        <taxon>Bacteria</taxon>
        <taxon>Pseudomonadati</taxon>
        <taxon>Pseudomonadota</taxon>
        <taxon>Gammaproteobacteria</taxon>
        <taxon>Enterobacterales</taxon>
        <taxon>Enterobacteriaceae</taxon>
        <taxon>Escherichia</taxon>
    </lineage>
</organism>
<sequence>MEKNNEVIQTHPLVGWDISTVDSYDALMLRLHYQTPNKSEQEGTEVGQTLWLTTDVARQFISILEAGIAKIESGDFQVNEYRRH</sequence>
<accession>P0AB34</accession>
<accession>P75927</accession>
<accession>Q9R374</accession>
<feature type="chain" id="PRO_0000168824" description="Biofilm regulator BssS">
    <location>
        <begin position="1"/>
        <end position="84"/>
    </location>
</feature>
<reference key="1">
    <citation type="journal article" date="2002" name="Proc. Natl. Acad. Sci. U.S.A.">
        <title>Extensive mosaic structure revealed by the complete genome sequence of uropathogenic Escherichia coli.</title>
        <authorList>
            <person name="Welch R.A."/>
            <person name="Burland V."/>
            <person name="Plunkett G. III"/>
            <person name="Redford P."/>
            <person name="Roesch P."/>
            <person name="Rasko D."/>
            <person name="Buckles E.L."/>
            <person name="Liou S.-R."/>
            <person name="Boutin A."/>
            <person name="Hackett J."/>
            <person name="Stroud D."/>
            <person name="Mayhew G.F."/>
            <person name="Rose D.J."/>
            <person name="Zhou S."/>
            <person name="Schwartz D.C."/>
            <person name="Perna N.T."/>
            <person name="Mobley H.L.T."/>
            <person name="Donnenberg M.S."/>
            <person name="Blattner F.R."/>
        </authorList>
    </citation>
    <scope>NUCLEOTIDE SEQUENCE [LARGE SCALE GENOMIC DNA]</scope>
    <source>
        <strain>CFT073 / ATCC 700928 / UPEC</strain>
    </source>
</reference>
<protein>
    <recommendedName>
        <fullName>Biofilm regulator BssS</fullName>
    </recommendedName>
</protein>
<comment type="function">
    <text evidence="1">Represses biofilm formation in M9C glu and LB glu media but not in M9C and LB media. Seems to act as a global regulator of several genes involved in catabolite repression and stress response and regulation of the uptake and export of signaling pathways. Could be involved the regulation of indole as well as uptake and export of AI-2 through a cAMP-dependent pathway (By similarity).</text>
</comment>
<comment type="sequence caution" evidence="2">
    <conflict type="erroneous initiation">
        <sequence resource="EMBL-CDS" id="AAN79800"/>
    </conflict>
</comment>
<evidence type="ECO:0000250" key="1"/>
<evidence type="ECO:0000305" key="2"/>
<dbReference type="EMBL" id="AE014075">
    <property type="protein sequence ID" value="AAN79800.1"/>
    <property type="status" value="ALT_INIT"/>
    <property type="molecule type" value="Genomic_DNA"/>
</dbReference>
<dbReference type="RefSeq" id="WP_000414438.1">
    <property type="nucleotide sequence ID" value="NZ_CP051263.1"/>
</dbReference>
<dbReference type="SMR" id="P0AB34"/>
<dbReference type="STRING" id="199310.c1327"/>
<dbReference type="GeneID" id="93776347"/>
<dbReference type="KEGG" id="ecc:c1327"/>
<dbReference type="eggNOG" id="ENOG5032S2R">
    <property type="taxonomic scope" value="Bacteria"/>
</dbReference>
<dbReference type="HOGENOM" id="CLU_193121_0_0_6"/>
<dbReference type="Proteomes" id="UP000001410">
    <property type="component" value="Chromosome"/>
</dbReference>
<dbReference type="InterPro" id="IPR025730">
    <property type="entry name" value="Biofilm_BssS"/>
</dbReference>
<dbReference type="NCBIfam" id="NF008958">
    <property type="entry name" value="PRK12301.1"/>
    <property type="match status" value="1"/>
</dbReference>
<dbReference type="Pfam" id="PF13991">
    <property type="entry name" value="BssS"/>
    <property type="match status" value="1"/>
</dbReference>
<proteinExistence type="inferred from homology"/>
<name>BSSS_ECOL6</name>
<keyword id="KW-1185">Reference proteome</keyword>
<gene>
    <name type="primary">bssS</name>
    <name type="ordered locus">c1327</name>
</gene>